<sequence>MPPNITALNTTRARTYVFRLPLFTRVVIIAIVGFWLAGLQSIVDIQQWGALIPDEMGLATLYRMNTFPFIHLNIFHAVMNILALTPLMERFEAEYGTLNCLALFFGPLTTIPAFLYIGLEKFVFGNNVAVMGASMWVFLLLGVEAVKTYKVNPNFVIGTYSIPTWTTPIGVLFAMAVLVPSSSFWGHAAGLVIGYGGMFSSTLNKKEKRQCADVKGVAGLGYVKFLAPPEKILRWIEGKLNLLGRLPHYVSIDQKTYGRFGVLPSNNTPAAASPGVALGLVGSTQRLGP</sequence>
<name>RBD2_PODAS</name>
<gene>
    <name type="primary">RBD2</name>
    <name type="ORF">Pa5D0065</name>
</gene>
<dbReference type="EC" id="3.4.21.105" evidence="2"/>
<dbReference type="EMBL" id="BX088700">
    <property type="protein sequence ID" value="CAD60752.1"/>
    <property type="molecule type" value="Genomic_DNA"/>
</dbReference>
<dbReference type="VEuPathDB" id="FungiDB:PODANS_5_5980"/>
<dbReference type="GO" id="GO:0000139">
    <property type="term" value="C:Golgi membrane"/>
    <property type="evidence" value="ECO:0007669"/>
    <property type="project" value="UniProtKB-SubCell"/>
</dbReference>
<dbReference type="GO" id="GO:0004252">
    <property type="term" value="F:serine-type endopeptidase activity"/>
    <property type="evidence" value="ECO:0007669"/>
    <property type="project" value="InterPro"/>
</dbReference>
<dbReference type="GO" id="GO:0006508">
    <property type="term" value="P:proteolysis"/>
    <property type="evidence" value="ECO:0007669"/>
    <property type="project" value="UniProtKB-KW"/>
</dbReference>
<dbReference type="Gene3D" id="1.20.1540.10">
    <property type="entry name" value="Rhomboid-like"/>
    <property type="match status" value="1"/>
</dbReference>
<dbReference type="InterPro" id="IPR022764">
    <property type="entry name" value="Peptidase_S54_rhomboid_dom"/>
</dbReference>
<dbReference type="InterPro" id="IPR035952">
    <property type="entry name" value="Rhomboid-like_sf"/>
</dbReference>
<dbReference type="PANTHER" id="PTHR43066:SF1">
    <property type="entry name" value="RHOMBOID PROTEIN 2"/>
    <property type="match status" value="1"/>
</dbReference>
<dbReference type="PANTHER" id="PTHR43066">
    <property type="entry name" value="RHOMBOID-RELATED PROTEIN"/>
    <property type="match status" value="1"/>
</dbReference>
<dbReference type="Pfam" id="PF01694">
    <property type="entry name" value="Rhomboid"/>
    <property type="match status" value="1"/>
</dbReference>
<dbReference type="SUPFAM" id="SSF144091">
    <property type="entry name" value="Rhomboid-like"/>
    <property type="match status" value="1"/>
</dbReference>
<reference key="1">
    <citation type="journal article" date="2003" name="Fungal Genet. Biol.">
        <title>Characterization of the genomic organization of the region bordering the centromere of chromosome V of Podospora anserina by direct sequencing.</title>
        <authorList>
            <person name="Silar P."/>
            <person name="Barreau C."/>
            <person name="Debuchy R."/>
            <person name="Kicka S."/>
            <person name="Turcq B."/>
            <person name="Sainsard-Chanet A."/>
            <person name="Sellem C.H."/>
            <person name="Billault A."/>
            <person name="Cattolico L."/>
            <person name="Duprat S."/>
            <person name="Weissenbach J."/>
        </authorList>
    </citation>
    <scope>NUCLEOTIDE SEQUENCE [LARGE SCALE GENOMIC DNA]</scope>
    <source>
        <strain>s</strain>
    </source>
</reference>
<feature type="chain" id="PRO_0000206190" description="Rhomboid-type serine protease 2">
    <location>
        <begin position="1"/>
        <end position="289"/>
    </location>
</feature>
<feature type="transmembrane region" description="Helical" evidence="3">
    <location>
        <begin position="26"/>
        <end position="46"/>
    </location>
</feature>
<feature type="transmembrane region" description="Helical" evidence="3">
    <location>
        <begin position="67"/>
        <end position="87"/>
    </location>
</feature>
<feature type="transmembrane region" description="Helical" evidence="3">
    <location>
        <begin position="100"/>
        <end position="120"/>
    </location>
</feature>
<feature type="transmembrane region" description="Helical" evidence="3">
    <location>
        <begin position="122"/>
        <end position="142"/>
    </location>
</feature>
<feature type="transmembrane region" description="Helical" evidence="3">
    <location>
        <begin position="157"/>
        <end position="179"/>
    </location>
</feature>
<feature type="transmembrane region" description="Helical" evidence="3">
    <location>
        <begin position="184"/>
        <end position="203"/>
    </location>
</feature>
<feature type="active site" description="Nucleophile" evidence="2">
    <location>
        <position position="134"/>
    </location>
</feature>
<feature type="active site" evidence="2">
    <location>
        <position position="187"/>
    </location>
</feature>
<keyword id="KW-0333">Golgi apparatus</keyword>
<keyword id="KW-0378">Hydrolase</keyword>
<keyword id="KW-0472">Membrane</keyword>
<keyword id="KW-0645">Protease</keyword>
<keyword id="KW-0720">Serine protease</keyword>
<keyword id="KW-0812">Transmembrane</keyword>
<keyword id="KW-1133">Transmembrane helix</keyword>
<accession>Q874X5</accession>
<organism>
    <name type="scientific">Podospora anserina</name>
    <name type="common">Pleurage anserina</name>
    <dbReference type="NCBI Taxonomy" id="2587412"/>
    <lineage>
        <taxon>Eukaryota</taxon>
        <taxon>Fungi</taxon>
        <taxon>Dikarya</taxon>
        <taxon>Ascomycota</taxon>
        <taxon>Pezizomycotina</taxon>
        <taxon>Sordariomycetes</taxon>
        <taxon>Sordariomycetidae</taxon>
        <taxon>Sordariales</taxon>
        <taxon>Podosporaceae</taxon>
        <taxon>Podospora</taxon>
    </lineage>
</organism>
<protein>
    <recommendedName>
        <fullName evidence="4">Rhomboid-type serine protease 2</fullName>
        <ecNumber evidence="2">3.4.21.105</ecNumber>
    </recommendedName>
    <alternativeName>
        <fullName evidence="4">Rhomboid protein 2</fullName>
    </alternativeName>
</protein>
<evidence type="ECO:0000250" key="1"/>
<evidence type="ECO:0000250" key="2">
    <source>
        <dbReference type="UniProtKB" id="O74926"/>
    </source>
</evidence>
<evidence type="ECO:0000255" key="3"/>
<evidence type="ECO:0000305" key="4"/>
<comment type="function">
    <text evidence="2">Probable rhomboid-type serine protease that catalyzes intramembrane proteolysis.</text>
</comment>
<comment type="catalytic activity">
    <reaction evidence="2">
        <text>Cleaves type-1 transmembrane domains using a catalytic dyad composed of serine and histidine that are contributed by different transmembrane domains.</text>
        <dbReference type="EC" id="3.4.21.105"/>
    </reaction>
</comment>
<comment type="subcellular location">
    <subcellularLocation>
        <location evidence="1">Golgi apparatus membrane</location>
        <topology evidence="1">Multi-pass membrane protein</topology>
    </subcellularLocation>
    <subcellularLocation>
        <location evidence="1">Golgi apparatus</location>
        <location evidence="1">cis-Golgi network membrane</location>
        <topology evidence="1">Multi-pass membrane protein</topology>
    </subcellularLocation>
</comment>
<comment type="similarity">
    <text evidence="4">Belongs to the peptidase S54 family.</text>
</comment>
<proteinExistence type="inferred from homology"/>